<sequence>MAHKKGQGSTQNNRDSIGRRLGVKKFGGEFVRAGNIIIRQRGTATHAGNNVGMGKDHTIFALIDGFVKFERKDKDRKKVSVYPA</sequence>
<name>RL27_CAMJR</name>
<proteinExistence type="inferred from homology"/>
<feature type="chain" id="PRO_0000181065" description="Large ribosomal subunit protein bL27">
    <location>
        <begin position="1"/>
        <end position="84"/>
    </location>
</feature>
<organism>
    <name type="scientific">Campylobacter jejuni (strain RM1221)</name>
    <dbReference type="NCBI Taxonomy" id="195099"/>
    <lineage>
        <taxon>Bacteria</taxon>
        <taxon>Pseudomonadati</taxon>
        <taxon>Campylobacterota</taxon>
        <taxon>Epsilonproteobacteria</taxon>
        <taxon>Campylobacterales</taxon>
        <taxon>Campylobacteraceae</taxon>
        <taxon>Campylobacter</taxon>
    </lineage>
</organism>
<reference key="1">
    <citation type="journal article" date="2005" name="PLoS Biol.">
        <title>Major structural differences and novel potential virulence mechanisms from the genomes of multiple Campylobacter species.</title>
        <authorList>
            <person name="Fouts D.E."/>
            <person name="Mongodin E.F."/>
            <person name="Mandrell R.E."/>
            <person name="Miller W.G."/>
            <person name="Rasko D.A."/>
            <person name="Ravel J."/>
            <person name="Brinkac L.M."/>
            <person name="DeBoy R.T."/>
            <person name="Parker C.T."/>
            <person name="Daugherty S.C."/>
            <person name="Dodson R.J."/>
            <person name="Durkin A.S."/>
            <person name="Madupu R."/>
            <person name="Sullivan S.A."/>
            <person name="Shetty J.U."/>
            <person name="Ayodeji M.A."/>
            <person name="Shvartsbeyn A."/>
            <person name="Schatz M.C."/>
            <person name="Badger J.H."/>
            <person name="Fraser C.M."/>
            <person name="Nelson K.E."/>
        </authorList>
    </citation>
    <scope>NUCLEOTIDE SEQUENCE [LARGE SCALE GENOMIC DNA]</scope>
    <source>
        <strain>RM1221</strain>
    </source>
</reference>
<accession>Q5HX71</accession>
<protein>
    <recommendedName>
        <fullName evidence="1">Large ribosomal subunit protein bL27</fullName>
    </recommendedName>
    <alternativeName>
        <fullName evidence="2">50S ribosomal protein L27</fullName>
    </alternativeName>
</protein>
<gene>
    <name evidence="1" type="primary">rpmA</name>
    <name type="ordered locus">CJE0090</name>
</gene>
<evidence type="ECO:0000255" key="1">
    <source>
        <dbReference type="HAMAP-Rule" id="MF_00539"/>
    </source>
</evidence>
<evidence type="ECO:0000305" key="2"/>
<keyword id="KW-0687">Ribonucleoprotein</keyword>
<keyword id="KW-0689">Ribosomal protein</keyword>
<comment type="similarity">
    <text evidence="1">Belongs to the bacterial ribosomal protein bL27 family.</text>
</comment>
<dbReference type="EMBL" id="CP000025">
    <property type="protein sequence ID" value="AAW34685.1"/>
    <property type="molecule type" value="Genomic_DNA"/>
</dbReference>
<dbReference type="RefSeq" id="WP_002800974.1">
    <property type="nucleotide sequence ID" value="NC_003912.7"/>
</dbReference>
<dbReference type="SMR" id="Q5HX71"/>
<dbReference type="GeneID" id="98394801"/>
<dbReference type="KEGG" id="cjr:CJE0090"/>
<dbReference type="HOGENOM" id="CLU_095424_4_0_7"/>
<dbReference type="GO" id="GO:0022625">
    <property type="term" value="C:cytosolic large ribosomal subunit"/>
    <property type="evidence" value="ECO:0007669"/>
    <property type="project" value="TreeGrafter"/>
</dbReference>
<dbReference type="GO" id="GO:0003735">
    <property type="term" value="F:structural constituent of ribosome"/>
    <property type="evidence" value="ECO:0007669"/>
    <property type="project" value="InterPro"/>
</dbReference>
<dbReference type="GO" id="GO:0006412">
    <property type="term" value="P:translation"/>
    <property type="evidence" value="ECO:0007669"/>
    <property type="project" value="UniProtKB-UniRule"/>
</dbReference>
<dbReference type="FunFam" id="2.40.50.100:FF:000004">
    <property type="entry name" value="50S ribosomal protein L27"/>
    <property type="match status" value="1"/>
</dbReference>
<dbReference type="Gene3D" id="2.40.50.100">
    <property type="match status" value="1"/>
</dbReference>
<dbReference type="HAMAP" id="MF_00539">
    <property type="entry name" value="Ribosomal_bL27"/>
    <property type="match status" value="1"/>
</dbReference>
<dbReference type="InterPro" id="IPR001684">
    <property type="entry name" value="Ribosomal_bL27"/>
</dbReference>
<dbReference type="InterPro" id="IPR018261">
    <property type="entry name" value="Ribosomal_bL27_CS"/>
</dbReference>
<dbReference type="NCBIfam" id="TIGR00062">
    <property type="entry name" value="L27"/>
    <property type="match status" value="1"/>
</dbReference>
<dbReference type="PANTHER" id="PTHR15893:SF0">
    <property type="entry name" value="LARGE RIBOSOMAL SUBUNIT PROTEIN BL27M"/>
    <property type="match status" value="1"/>
</dbReference>
<dbReference type="PANTHER" id="PTHR15893">
    <property type="entry name" value="RIBOSOMAL PROTEIN L27"/>
    <property type="match status" value="1"/>
</dbReference>
<dbReference type="Pfam" id="PF01016">
    <property type="entry name" value="Ribosomal_L27"/>
    <property type="match status" value="1"/>
</dbReference>
<dbReference type="PRINTS" id="PR00063">
    <property type="entry name" value="RIBOSOMALL27"/>
</dbReference>
<dbReference type="SUPFAM" id="SSF110324">
    <property type="entry name" value="Ribosomal L27 protein-like"/>
    <property type="match status" value="1"/>
</dbReference>
<dbReference type="PROSITE" id="PS00831">
    <property type="entry name" value="RIBOSOMAL_L27"/>
    <property type="match status" value="1"/>
</dbReference>